<accession>A5ILE7</accession>
<comment type="function">
    <text evidence="1">Necessary for efficient RNA polymerase transcription elongation past template-encoded arresting sites. The arresting sites in DNA have the property of trapping a certain fraction of elongating RNA polymerases that pass through, resulting in locked ternary complexes. Cleavage of the nascent transcript by cleavage factors such as GreA or GreB allows the resumption of elongation from the new 3'terminus. GreA releases sequences of 2 to 3 nucleotides.</text>
</comment>
<comment type="similarity">
    <text evidence="1">Belongs to the GreA/GreB family.</text>
</comment>
<reference key="1">
    <citation type="submission" date="2007-05" db="EMBL/GenBank/DDBJ databases">
        <title>Complete sequence of Thermotoga petrophila RKU-1.</title>
        <authorList>
            <consortium name="US DOE Joint Genome Institute"/>
            <person name="Copeland A."/>
            <person name="Lucas S."/>
            <person name="Lapidus A."/>
            <person name="Barry K."/>
            <person name="Glavina del Rio T."/>
            <person name="Dalin E."/>
            <person name="Tice H."/>
            <person name="Pitluck S."/>
            <person name="Sims D."/>
            <person name="Brettin T."/>
            <person name="Bruce D."/>
            <person name="Detter J.C."/>
            <person name="Han C."/>
            <person name="Tapia R."/>
            <person name="Schmutz J."/>
            <person name="Larimer F."/>
            <person name="Land M."/>
            <person name="Hauser L."/>
            <person name="Kyrpides N."/>
            <person name="Mikhailova N."/>
            <person name="Nelson K."/>
            <person name="Gogarten J.P."/>
            <person name="Noll K."/>
            <person name="Richardson P."/>
        </authorList>
    </citation>
    <scope>NUCLEOTIDE SEQUENCE [LARGE SCALE GENOMIC DNA]</scope>
    <source>
        <strain>ATCC BAA-488 / DSM 13995 / JCM 10881 / RKU-1</strain>
    </source>
</reference>
<dbReference type="EMBL" id="CP000702">
    <property type="protein sequence ID" value="ABQ47020.1"/>
    <property type="molecule type" value="Genomic_DNA"/>
</dbReference>
<dbReference type="RefSeq" id="WP_011943557.1">
    <property type="nucleotide sequence ID" value="NC_009486.1"/>
</dbReference>
<dbReference type="SMR" id="A5ILE7"/>
<dbReference type="STRING" id="390874.Tpet_1002"/>
<dbReference type="KEGG" id="tpt:Tpet_1002"/>
<dbReference type="eggNOG" id="COG0782">
    <property type="taxonomic scope" value="Bacteria"/>
</dbReference>
<dbReference type="HOGENOM" id="CLU_101379_2_1_0"/>
<dbReference type="Proteomes" id="UP000006558">
    <property type="component" value="Chromosome"/>
</dbReference>
<dbReference type="GO" id="GO:0003677">
    <property type="term" value="F:DNA binding"/>
    <property type="evidence" value="ECO:0007669"/>
    <property type="project" value="UniProtKB-UniRule"/>
</dbReference>
<dbReference type="GO" id="GO:0070063">
    <property type="term" value="F:RNA polymerase binding"/>
    <property type="evidence" value="ECO:0007669"/>
    <property type="project" value="InterPro"/>
</dbReference>
<dbReference type="GO" id="GO:0006354">
    <property type="term" value="P:DNA-templated transcription elongation"/>
    <property type="evidence" value="ECO:0007669"/>
    <property type="project" value="TreeGrafter"/>
</dbReference>
<dbReference type="GO" id="GO:0032784">
    <property type="term" value="P:regulation of DNA-templated transcription elongation"/>
    <property type="evidence" value="ECO:0007669"/>
    <property type="project" value="UniProtKB-UniRule"/>
</dbReference>
<dbReference type="FunFam" id="1.10.287.180:FF:000001">
    <property type="entry name" value="Transcription elongation factor GreA"/>
    <property type="match status" value="1"/>
</dbReference>
<dbReference type="FunFam" id="3.10.50.30:FF:000001">
    <property type="entry name" value="Transcription elongation factor GreA"/>
    <property type="match status" value="1"/>
</dbReference>
<dbReference type="Gene3D" id="3.10.50.30">
    <property type="entry name" value="Transcription elongation factor, GreA/GreB, C-terminal domain"/>
    <property type="match status" value="1"/>
</dbReference>
<dbReference type="Gene3D" id="1.10.287.180">
    <property type="entry name" value="Transcription elongation factor, GreA/GreB, N-terminal domain"/>
    <property type="match status" value="1"/>
</dbReference>
<dbReference type="HAMAP" id="MF_00105">
    <property type="entry name" value="GreA_GreB"/>
    <property type="match status" value="1"/>
</dbReference>
<dbReference type="InterPro" id="IPR036953">
    <property type="entry name" value="GreA/GreB_C_sf"/>
</dbReference>
<dbReference type="InterPro" id="IPR018151">
    <property type="entry name" value="TF_GreA/GreB_CS"/>
</dbReference>
<dbReference type="InterPro" id="IPR006359">
    <property type="entry name" value="Tscrpt_elong_fac_GreA"/>
</dbReference>
<dbReference type="InterPro" id="IPR028624">
    <property type="entry name" value="Tscrpt_elong_fac_GreA/B"/>
</dbReference>
<dbReference type="InterPro" id="IPR001437">
    <property type="entry name" value="Tscrpt_elong_fac_GreA/B_C"/>
</dbReference>
<dbReference type="InterPro" id="IPR023459">
    <property type="entry name" value="Tscrpt_elong_fac_GreA/B_fam"/>
</dbReference>
<dbReference type="InterPro" id="IPR022691">
    <property type="entry name" value="Tscrpt_elong_fac_GreA/B_N"/>
</dbReference>
<dbReference type="InterPro" id="IPR036805">
    <property type="entry name" value="Tscrpt_elong_fac_GreA/B_N_sf"/>
</dbReference>
<dbReference type="NCBIfam" id="TIGR01462">
    <property type="entry name" value="greA"/>
    <property type="match status" value="1"/>
</dbReference>
<dbReference type="NCBIfam" id="NF001263">
    <property type="entry name" value="PRK00226.1-4"/>
    <property type="match status" value="1"/>
</dbReference>
<dbReference type="PANTHER" id="PTHR30437">
    <property type="entry name" value="TRANSCRIPTION ELONGATION FACTOR GREA"/>
    <property type="match status" value="1"/>
</dbReference>
<dbReference type="PANTHER" id="PTHR30437:SF4">
    <property type="entry name" value="TRANSCRIPTION ELONGATION FACTOR GREA"/>
    <property type="match status" value="1"/>
</dbReference>
<dbReference type="Pfam" id="PF01272">
    <property type="entry name" value="GreA_GreB"/>
    <property type="match status" value="1"/>
</dbReference>
<dbReference type="Pfam" id="PF03449">
    <property type="entry name" value="GreA_GreB_N"/>
    <property type="match status" value="1"/>
</dbReference>
<dbReference type="PIRSF" id="PIRSF006092">
    <property type="entry name" value="GreA_GreB"/>
    <property type="match status" value="1"/>
</dbReference>
<dbReference type="SUPFAM" id="SSF54534">
    <property type="entry name" value="FKBP-like"/>
    <property type="match status" value="1"/>
</dbReference>
<dbReference type="SUPFAM" id="SSF46557">
    <property type="entry name" value="GreA transcript cleavage protein, N-terminal domain"/>
    <property type="match status" value="1"/>
</dbReference>
<dbReference type="PROSITE" id="PS00829">
    <property type="entry name" value="GREAB_1"/>
    <property type="match status" value="1"/>
</dbReference>
<dbReference type="PROSITE" id="PS00830">
    <property type="entry name" value="GREAB_2"/>
    <property type="match status" value="1"/>
</dbReference>
<sequence length="156" mass="17866">MKKVRLTREGYEKLKKELEDLKRKFMYEISERIKEARELGDLSENSEYEAAKNEQGRVGSRIMEIEQILSNAEIIEDSEESDEVTLGKWVVIKNLDTGEEHKFRIVTPQEADFFAQKLSSDSPLGKSLLGRKVGDVVKVKAPSGVQRYQVMAVMNK</sequence>
<keyword id="KW-0175">Coiled coil</keyword>
<keyword id="KW-0238">DNA-binding</keyword>
<keyword id="KW-0804">Transcription</keyword>
<keyword id="KW-0805">Transcription regulation</keyword>
<organism>
    <name type="scientific">Thermotoga petrophila (strain ATCC BAA-488 / DSM 13995 / JCM 10881 / RKU-1)</name>
    <dbReference type="NCBI Taxonomy" id="390874"/>
    <lineage>
        <taxon>Bacteria</taxon>
        <taxon>Thermotogati</taxon>
        <taxon>Thermotogota</taxon>
        <taxon>Thermotogae</taxon>
        <taxon>Thermotogales</taxon>
        <taxon>Thermotogaceae</taxon>
        <taxon>Thermotoga</taxon>
    </lineage>
</organism>
<feature type="chain" id="PRO_1000034320" description="Transcription elongation factor GreA">
    <location>
        <begin position="1"/>
        <end position="156"/>
    </location>
</feature>
<feature type="coiled-coil region" evidence="1">
    <location>
        <begin position="1"/>
        <end position="32"/>
    </location>
</feature>
<protein>
    <recommendedName>
        <fullName evidence="1">Transcription elongation factor GreA</fullName>
    </recommendedName>
    <alternativeName>
        <fullName evidence="1">Transcript cleavage factor GreA</fullName>
    </alternativeName>
</protein>
<gene>
    <name evidence="1" type="primary">greA</name>
    <name type="ordered locus">Tpet_1002</name>
</gene>
<proteinExistence type="inferred from homology"/>
<evidence type="ECO:0000255" key="1">
    <source>
        <dbReference type="HAMAP-Rule" id="MF_00105"/>
    </source>
</evidence>
<name>GREA_THEP1</name>